<protein>
    <recommendedName>
        <fullName>Multidrug resistance protein MdtL</fullName>
    </recommendedName>
</protein>
<accession>Q57HZ5</accession>
<name>MDTL_SALCH</name>
<organism>
    <name type="scientific">Salmonella choleraesuis (strain SC-B67)</name>
    <dbReference type="NCBI Taxonomy" id="321314"/>
    <lineage>
        <taxon>Bacteria</taxon>
        <taxon>Pseudomonadati</taxon>
        <taxon>Pseudomonadota</taxon>
        <taxon>Gammaproteobacteria</taxon>
        <taxon>Enterobacterales</taxon>
        <taxon>Enterobacteriaceae</taxon>
        <taxon>Salmonella</taxon>
    </lineage>
</organism>
<gene>
    <name type="primary">mdtL</name>
    <name type="ordered locus">SCH_3761</name>
</gene>
<feature type="chain" id="PRO_0000173357" description="Multidrug resistance protein MdtL">
    <location>
        <begin position="1"/>
        <end position="395"/>
    </location>
</feature>
<feature type="topological domain" description="Cytoplasmic" evidence="2">
    <location>
        <begin position="1"/>
        <end position="3"/>
    </location>
</feature>
<feature type="transmembrane region" description="Helical" evidence="2">
    <location>
        <begin position="4"/>
        <end position="24"/>
    </location>
</feature>
<feature type="topological domain" description="Periplasmic" evidence="2">
    <location>
        <begin position="25"/>
        <end position="41"/>
    </location>
</feature>
<feature type="transmembrane region" description="Helical" evidence="2">
    <location>
        <begin position="42"/>
        <end position="62"/>
    </location>
</feature>
<feature type="topological domain" description="Cytoplasmic" evidence="2">
    <location>
        <begin position="63"/>
        <end position="68"/>
    </location>
</feature>
<feature type="transmembrane region" description="Helical" evidence="2">
    <location>
        <begin position="69"/>
        <end position="89"/>
    </location>
</feature>
<feature type="topological domain" description="Periplasmic" evidence="2">
    <location>
        <begin position="90"/>
        <end position="92"/>
    </location>
</feature>
<feature type="transmembrane region" description="Helical" evidence="2">
    <location>
        <begin position="93"/>
        <end position="113"/>
    </location>
</feature>
<feature type="topological domain" description="Cytoplasmic" evidence="2">
    <location>
        <begin position="114"/>
        <end position="130"/>
    </location>
</feature>
<feature type="transmembrane region" description="Helical" evidence="2">
    <location>
        <begin position="131"/>
        <end position="151"/>
    </location>
</feature>
<feature type="topological domain" description="Periplasmic" evidence="2">
    <location>
        <begin position="152"/>
        <end position="157"/>
    </location>
</feature>
<feature type="transmembrane region" description="Helical" evidence="2">
    <location>
        <begin position="158"/>
        <end position="178"/>
    </location>
</feature>
<feature type="topological domain" description="Cytoplasmic" evidence="2">
    <location>
        <begin position="179"/>
        <end position="216"/>
    </location>
</feature>
<feature type="transmembrane region" description="Helical" evidence="2">
    <location>
        <begin position="217"/>
        <end position="237"/>
    </location>
</feature>
<feature type="topological domain" description="Periplasmic" evidence="2">
    <location>
        <begin position="238"/>
        <end position="246"/>
    </location>
</feature>
<feature type="transmembrane region" description="Helical" evidence="2">
    <location>
        <begin position="247"/>
        <end position="267"/>
    </location>
</feature>
<feature type="topological domain" description="Cytoplasmic" evidence="2">
    <location>
        <begin position="268"/>
        <end position="270"/>
    </location>
</feature>
<feature type="transmembrane region" description="Helical" evidence="2">
    <location>
        <begin position="271"/>
        <end position="291"/>
    </location>
</feature>
<feature type="topological domain" description="Periplasmic" evidence="2">
    <location>
        <begin position="292"/>
        <end position="294"/>
    </location>
</feature>
<feature type="transmembrane region" description="Helical" evidence="2">
    <location>
        <begin position="295"/>
        <end position="315"/>
    </location>
</feature>
<feature type="topological domain" description="Cytoplasmic" evidence="2">
    <location>
        <begin position="316"/>
        <end position="332"/>
    </location>
</feature>
<feature type="transmembrane region" description="Helical" evidence="2">
    <location>
        <begin position="333"/>
        <end position="353"/>
    </location>
</feature>
<feature type="topological domain" description="Periplasmic" evidence="2">
    <location>
        <begin position="354"/>
        <end position="357"/>
    </location>
</feature>
<feature type="transmembrane region" description="Helical" evidence="2">
    <location>
        <begin position="358"/>
        <end position="378"/>
    </location>
</feature>
<feature type="topological domain" description="Cytoplasmic" evidence="2">
    <location>
        <begin position="379"/>
        <end position="395"/>
    </location>
</feature>
<proteinExistence type="inferred from homology"/>
<dbReference type="EMBL" id="AE017220">
    <property type="protein sequence ID" value="AAX67667.1"/>
    <property type="molecule type" value="Genomic_DNA"/>
</dbReference>
<dbReference type="RefSeq" id="WP_000819627.1">
    <property type="nucleotide sequence ID" value="NC_006905.1"/>
</dbReference>
<dbReference type="SMR" id="Q57HZ5"/>
<dbReference type="KEGG" id="sec:SCH_3761"/>
<dbReference type="HOGENOM" id="CLU_001265_47_1_6"/>
<dbReference type="Proteomes" id="UP000000538">
    <property type="component" value="Chromosome"/>
</dbReference>
<dbReference type="GO" id="GO:0005886">
    <property type="term" value="C:plasma membrane"/>
    <property type="evidence" value="ECO:0007669"/>
    <property type="project" value="UniProtKB-SubCell"/>
</dbReference>
<dbReference type="GO" id="GO:0022857">
    <property type="term" value="F:transmembrane transporter activity"/>
    <property type="evidence" value="ECO:0007669"/>
    <property type="project" value="UniProtKB-UniRule"/>
</dbReference>
<dbReference type="CDD" id="cd17320">
    <property type="entry name" value="MFS_MdfA_MDR_like"/>
    <property type="match status" value="1"/>
</dbReference>
<dbReference type="FunFam" id="1.20.1720.10:FF:000003">
    <property type="entry name" value="Multidrug resistance protein MdtL"/>
    <property type="match status" value="1"/>
</dbReference>
<dbReference type="Gene3D" id="1.20.1720.10">
    <property type="entry name" value="Multidrug resistance protein D"/>
    <property type="match status" value="1"/>
</dbReference>
<dbReference type="HAMAP" id="MF_01530">
    <property type="entry name" value="MFS_MdtL"/>
    <property type="match status" value="1"/>
</dbReference>
<dbReference type="InterPro" id="IPR011701">
    <property type="entry name" value="MFS"/>
</dbReference>
<dbReference type="InterPro" id="IPR020846">
    <property type="entry name" value="MFS_dom"/>
</dbReference>
<dbReference type="InterPro" id="IPR036259">
    <property type="entry name" value="MFS_trans_sf"/>
</dbReference>
<dbReference type="InterPro" id="IPR023697">
    <property type="entry name" value="Multidrug-R_MdtL"/>
</dbReference>
<dbReference type="NCBIfam" id="NF007782">
    <property type="entry name" value="PRK10473.1"/>
    <property type="match status" value="1"/>
</dbReference>
<dbReference type="PANTHER" id="PTHR42718">
    <property type="entry name" value="MAJOR FACILITATOR SUPERFAMILY MULTIDRUG TRANSPORTER MFSC"/>
    <property type="match status" value="1"/>
</dbReference>
<dbReference type="PANTHER" id="PTHR42718:SF9">
    <property type="entry name" value="MAJOR FACILITATOR SUPERFAMILY MULTIDRUG TRANSPORTER MFSC"/>
    <property type="match status" value="1"/>
</dbReference>
<dbReference type="Pfam" id="PF07690">
    <property type="entry name" value="MFS_1"/>
    <property type="match status" value="1"/>
</dbReference>
<dbReference type="SUPFAM" id="SSF103473">
    <property type="entry name" value="MFS general substrate transporter"/>
    <property type="match status" value="1"/>
</dbReference>
<dbReference type="PROSITE" id="PS50850">
    <property type="entry name" value="MFS"/>
    <property type="match status" value="1"/>
</dbReference>
<keyword id="KW-0997">Cell inner membrane</keyword>
<keyword id="KW-1003">Cell membrane</keyword>
<keyword id="KW-0472">Membrane</keyword>
<keyword id="KW-0812">Transmembrane</keyword>
<keyword id="KW-1133">Transmembrane helix</keyword>
<keyword id="KW-0813">Transport</keyword>
<reference key="1">
    <citation type="journal article" date="2005" name="Nucleic Acids Res.">
        <title>The genome sequence of Salmonella enterica serovar Choleraesuis, a highly invasive and resistant zoonotic pathogen.</title>
        <authorList>
            <person name="Chiu C.-H."/>
            <person name="Tang P."/>
            <person name="Chu C."/>
            <person name="Hu S."/>
            <person name="Bao Q."/>
            <person name="Yu J."/>
            <person name="Chou Y.-Y."/>
            <person name="Wang H.-S."/>
            <person name="Lee Y.-S."/>
        </authorList>
    </citation>
    <scope>NUCLEOTIDE SEQUENCE [LARGE SCALE GENOMIC DNA]</scope>
    <source>
        <strain>SC-B67</strain>
    </source>
</reference>
<sequence length="395" mass="42055">MKRFLLCSFALVLLYPAGIDMYLVGLPRIAVDLNASESQLHIAFSVYLAGMATAMLFAGKIADQSGRKPVAIVGAIVFMMASLLCSRASEGSLFLSGRFLQGIGAGGCYVVAFAILRDTLDEHRRAKVLSLLNGITCIVPVLAPVVGHLIMLRFPWQSLFYTMSAMGIIVGLLSLFILRETRPVRLAPRDLSRSSPAAESLINRFFVSRLAITTLSVSVILTFVNASPVLLMEVMGFSRGDYAITMALTAGVSMVVSFSTPFALGLFKPRTLMLVSQGLFLTAGVTLSLAHTNTVTLFGLTLICAGFSVGFGVAMSQALGPFSLRAGVASSTLGIAQVCGSSLWIWLAAILGISAMNMLIGILIGCSIVSILLIFSVAPNRSVAEHEEIPYQSRP</sequence>
<comment type="subcellular location">
    <subcellularLocation>
        <location evidence="1">Cell inner membrane</location>
        <topology evidence="1">Multi-pass membrane protein</topology>
    </subcellularLocation>
</comment>
<comment type="similarity">
    <text evidence="3">Belongs to the major facilitator superfamily. DHA1 family. MdtL (TC 2.A.1.2.22) subfamily.</text>
</comment>
<evidence type="ECO:0000250" key="1"/>
<evidence type="ECO:0000255" key="2"/>
<evidence type="ECO:0000305" key="3"/>